<proteinExistence type="inferred from homology"/>
<name>VF267_ASFP4</name>
<protein>
    <recommendedName>
        <fullName>Protein I267L</fullName>
        <shortName>pI267L</shortName>
    </recommendedName>
</protein>
<sequence length="267" mass="30786">MLLVLIDVDGFMGQLYNEKGTQTILIPREVVIFYWEKNTASKILQLFFHGGIDPIFEKINQRSFSFQSRHIHHFALDESPLPNSIALPTDTLQAFKAGKKMIFQHLVKITKDHEQILLLHKGGPEGEWVRSFNIPNATVQNLNDLCCPSVEKLVLKKKDYISSSIGCPKHIQGSNHCPVFECHVLFKWIQENTSIVQGVLERPSLPYEKAVLFIEHRINMVDNHPFKKDSIKQNQKKKNWIATQFVQHGMYVDNGILGKIYNKYSLF</sequence>
<keyword id="KW-0244">Early protein</keyword>
<keyword id="KW-0945">Host-virus interaction</keyword>
<keyword id="KW-1090">Inhibition of host innate immune response by virus</keyword>
<keyword id="KW-1088">Inhibition of host RIG-I by virus</keyword>
<keyword id="KW-1113">Inhibition of host RLR pathway by virus</keyword>
<keyword id="KW-0899">Viral immunoevasion</keyword>
<organismHost>
    <name type="scientific">Ornithodoros</name>
    <name type="common">relapsing fever ticks</name>
    <dbReference type="NCBI Taxonomy" id="6937"/>
</organismHost>
<organismHost>
    <name type="scientific">Phacochoerus aethiopicus</name>
    <name type="common">Warthog</name>
    <dbReference type="NCBI Taxonomy" id="85517"/>
</organismHost>
<organismHost>
    <name type="scientific">Phacochoerus africanus</name>
    <name type="common">Warthog</name>
    <dbReference type="NCBI Taxonomy" id="41426"/>
</organismHost>
<organismHost>
    <name type="scientific">Potamochoerus larvatus</name>
    <name type="common">Bushpig</name>
    <dbReference type="NCBI Taxonomy" id="273792"/>
</organismHost>
<organismHost>
    <name type="scientific">Sus scrofa</name>
    <name type="common">Pig</name>
    <dbReference type="NCBI Taxonomy" id="9823"/>
</organismHost>
<evidence type="ECO:0000305" key="1"/>
<organism>
    <name type="scientific">African swine fever virus (isolate Tick/South Africa/Pretoriuskop Pr4/1996)</name>
    <name type="common">ASFV</name>
    <dbReference type="NCBI Taxonomy" id="561443"/>
    <lineage>
        <taxon>Viruses</taxon>
        <taxon>Varidnaviria</taxon>
        <taxon>Bamfordvirae</taxon>
        <taxon>Nucleocytoviricota</taxon>
        <taxon>Pokkesviricetes</taxon>
        <taxon>Asfuvirales</taxon>
        <taxon>Asfarviridae</taxon>
        <taxon>Asfivirus</taxon>
        <taxon>African swine fever virus</taxon>
    </lineage>
</organism>
<reference key="1">
    <citation type="submission" date="2003-03" db="EMBL/GenBank/DDBJ databases">
        <title>African swine fever virus genomes.</title>
        <authorList>
            <person name="Kutish G.F."/>
            <person name="Rock D.L."/>
        </authorList>
    </citation>
    <scope>NUCLEOTIDE SEQUENCE [GENOMIC DNA]</scope>
</reference>
<dbReference type="EMBL" id="AY261363">
    <property type="status" value="NOT_ANNOTATED_CDS"/>
    <property type="molecule type" value="Genomic_DNA"/>
</dbReference>
<dbReference type="Proteomes" id="UP000000859">
    <property type="component" value="Segment"/>
</dbReference>
<dbReference type="GO" id="GO:0039540">
    <property type="term" value="P:symbiont-mediated suppression of host cytoplasmic pattern recognition receptor signaling pathway via inhibition of RIG-I activity"/>
    <property type="evidence" value="ECO:0007669"/>
    <property type="project" value="UniProtKB-KW"/>
</dbReference>
<accession>P0CAC6</accession>
<gene>
    <name type="ordered locus">Pret-149</name>
</gene>
<comment type="induction">
    <text evidence="1">Expressed in the early phase of the viral replicative cycle.</text>
</comment>
<comment type="similarity">
    <text evidence="1">Belongs to the asfivirus I267L family.</text>
</comment>
<feature type="chain" id="PRO_0000373627" description="Protein I267L">
    <location>
        <begin position="1"/>
        <end position="267"/>
    </location>
</feature>